<proteinExistence type="inferred from homology"/>
<organism>
    <name type="scientific">Human immunodeficiency virus type 1 group M subtype B (isolate CDC-451)</name>
    <name type="common">HIV-1</name>
    <dbReference type="NCBI Taxonomy" id="11687"/>
    <lineage>
        <taxon>Viruses</taxon>
        <taxon>Riboviria</taxon>
        <taxon>Pararnavirae</taxon>
        <taxon>Artverviricota</taxon>
        <taxon>Revtraviricetes</taxon>
        <taxon>Ortervirales</taxon>
        <taxon>Retroviridae</taxon>
        <taxon>Orthoretrovirinae</taxon>
        <taxon>Lentivirus</taxon>
        <taxon>Human immunodeficiency virus type 1</taxon>
    </lineage>
</organism>
<name>VPR_HV1C4</name>
<sequence length="16" mass="1747">NSATTAVYSFQDWVSA</sequence>
<dbReference type="EMBL" id="AH002346">
    <property type="protein sequence ID" value="AAA44308.1"/>
    <property type="molecule type" value="Genomic_RNA"/>
</dbReference>
<dbReference type="GO" id="GO:0043657">
    <property type="term" value="C:host cell"/>
    <property type="evidence" value="ECO:0007669"/>
    <property type="project" value="GOC"/>
</dbReference>
<dbReference type="GO" id="GO:0042025">
    <property type="term" value="C:host cell nucleus"/>
    <property type="evidence" value="ECO:0007669"/>
    <property type="project" value="UniProtKB-SubCell"/>
</dbReference>
<dbReference type="GO" id="GO:0043655">
    <property type="term" value="C:host extracellular space"/>
    <property type="evidence" value="ECO:0007669"/>
    <property type="project" value="UniProtKB-SubCell"/>
</dbReference>
<dbReference type="GO" id="GO:0044423">
    <property type="term" value="C:virion component"/>
    <property type="evidence" value="ECO:0007669"/>
    <property type="project" value="UniProtKB-KW"/>
</dbReference>
<dbReference type="GO" id="GO:0034220">
    <property type="term" value="P:monoatomic ion transmembrane transport"/>
    <property type="evidence" value="ECO:0007669"/>
    <property type="project" value="UniProtKB-KW"/>
</dbReference>
<dbReference type="GO" id="GO:0046718">
    <property type="term" value="P:symbiont entry into host cell"/>
    <property type="evidence" value="ECO:0007669"/>
    <property type="project" value="UniProtKB-KW"/>
</dbReference>
<dbReference type="GO" id="GO:0075732">
    <property type="term" value="P:viral penetration into host nucleus"/>
    <property type="evidence" value="ECO:0007669"/>
    <property type="project" value="UniProtKB-KW"/>
</dbReference>
<keyword id="KW-0010">Activator</keyword>
<keyword id="KW-0014">AIDS</keyword>
<keyword id="KW-0053">Apoptosis</keyword>
<keyword id="KW-0131">Cell cycle</keyword>
<keyword id="KW-1048">Host nucleus</keyword>
<keyword id="KW-0945">Host-virus interaction</keyword>
<keyword id="KW-0407">Ion channel</keyword>
<keyword id="KW-0406">Ion transport</keyword>
<keyword id="KW-0804">Transcription</keyword>
<keyword id="KW-0805">Transcription regulation</keyword>
<keyword id="KW-0813">Transport</keyword>
<keyword id="KW-1163">Viral penetration into host nucleus</keyword>
<keyword id="KW-0946">Virion</keyword>
<keyword id="KW-1160">Virus entry into host cell</keyword>
<gene>
    <name type="primary">vpr</name>
</gene>
<reference key="1">
    <citation type="journal article" date="1986" name="Proc. Natl. Acad. Sci. U.S.A.">
        <title>Molecular cloning and primary nucleotide sequence analysis of a distinct human immunodeficiency virus isolate reveal significant divergence in its genomic sequences.</title>
        <authorList>
            <person name="Desai S.M."/>
            <person name="Kalyanaraman V.S."/>
            <person name="Casey J.M."/>
            <person name="Srinivasan A."/>
            <person name="Andersen P.R."/>
            <person name="Devare S.G."/>
        </authorList>
    </citation>
    <scope>NUCLEOTIDE SEQUENCE [GENOMIC RNA]</scope>
</reference>
<comment type="function">
    <text evidence="1">Involved in the transport of the viral pre-integration (PIC) complex to the nucleus during the early stages of the infection. This function is crucial for viral infection of non-dividing macrophages. May interact with karyopherin alpha/KPNA1 and KPNA2 to increase their affinity for proteins containing basic-type nuclear localization signal, including the viral matrix protein MA, thus facilitating the translocation of the viral genome into the nucleus. May also act directly at the nuclear pore complex, by binding nucleoporins phenylalanine-glycine (FG)-repeat regions. Has an anti-apoptotic effect, whereas high level of expression induces apoptosis. Interacts with mitochondrial permeability transition pore complex (PTPC), presumably through the binding of ANT proteins. This induces a rapid dissipation of the mitochondrial transmembrane potential, and mitochondrial release of apoptogenic proteins such as cytochrome C or apoptosis inducing factors. Prevents infected cells from undergoing mitosis and proliferating, by inducing arrest or delay in the G2 phase of the cell cycle. The arrest in G2 is characterized by low levels of CCNB1-CDC2 complex and corresponding inhibitory phosphorylation of CDC2. Cell cycle arrest creates a favorable environment for maximizing viral expression and production. This may be mediated by interacting with and inhibiting human CDC25C, which normally activates the CCNB1-CDC2 complex, or by binding SF3B2/SAP145. This function is independent of nuclear localization. Cell cycle arrest reportedly occurs within hours of infection and is not blocked by antiviral agents, suggesting that it is initiated by the Vpr carried into the virion. Stimulates gene expression driven by the HIV-1 LTR by interacting with human SP1, TFIIB and TFIID. Moreover, the G2/M cell cycle arrest creates a cellular environment where the HIV-1 LTR is transcriptionally more active. Essential for unintegrated viral DNA expression. Detected in the serum and cerebrospinal fluid of AIDS patient, where it may induce cell death to bystander cells. This necrotic or apoptotic effect might function by entering target cell plasma membrane to form ion channel (By similarity).</text>
</comment>
<comment type="subunit">
    <text evidence="1">Homooligomer, may form homodimer. Interacts with p6-gag region of the Pr55 Gag precursor protein through a (Leu-X-X)4 motif near the C terminus of the P6gag protein. Interacts with host SLC25A4/ANT1, SLC25A5/ANT2, SLC25A6/ANT3, SP1, CDC25C, RAD23A/HHR23A, COPS6/HVIP, TFIIB, UNG, SF3B2/SAP145, KPNA1 and KPNA2. Interacts with host VPRBP/DCAF1, leading to hijack the CUL4A-RBX1-DDB1-DCAF1/VPRBP complex, mediate ubiquitination of host proteins such as TERT and ZGPAT and arrest the cell cycle in G2 phase. Interacts with ANKHD1 (By similarity).</text>
</comment>
<comment type="subcellular location">
    <subcellularLocation>
        <location>Virion</location>
    </subcellularLocation>
    <subcellularLocation>
        <location>Host nucleus</location>
    </subcellularLocation>
    <subcellularLocation>
        <location>Host extracellular space</location>
    </subcellularLocation>
    <text evidence="1">Incorporation into virion is dependent on p6 GAG sequences. Lacks a canonical nuclear localization signal, thus import into nucleus may function independently of the human importin pathway. Detected in high quantity in the serum and cerebrospinal fluid of AIDS patient (By similarity).</text>
</comment>
<comment type="miscellaneous">
    <text>HIV-1 lineages are divided in three main groups, M (for Major), O (for Outlier), and N (for New, or Non-M, Non-O). The vast majority of strains found worldwide belong to the group M. Group O seems to be endemic to and largely confined to Cameroon and neighboring countries in West Central Africa, where these viruses represent a small minority of HIV-1 strains. The group N is represented by a limited number of isolates from Cameroonian persons. The group M is further subdivided in 9 clades or subtypes (A to D, F to H, J and K).</text>
</comment>
<protein>
    <recommendedName>
        <fullName>Protein Vpr</fullName>
    </recommendedName>
    <alternativeName>
        <fullName>R ORF protein</fullName>
    </alternativeName>
    <alternativeName>
        <fullName>Viral protein R</fullName>
    </alternativeName>
</protein>
<organismHost>
    <name type="scientific">Homo sapiens</name>
    <name type="common">Human</name>
    <dbReference type="NCBI Taxonomy" id="9606"/>
</organismHost>
<feature type="chain" id="PRO_0000085440" description="Protein Vpr">
    <location>
        <begin position="1" status="less than"/>
        <end position="16"/>
    </location>
</feature>
<feature type="non-terminal residue">
    <location>
        <position position="1"/>
    </location>
</feature>
<accession>P05953</accession>
<evidence type="ECO:0000250" key="1"/>